<protein>
    <recommendedName>
        <fullName evidence="1">Nucleotide-binding protein Mpe_A3039</fullName>
    </recommendedName>
</protein>
<gene>
    <name type="ordered locus">Mpe_A3039</name>
</gene>
<reference key="1">
    <citation type="journal article" date="2007" name="J. Bacteriol.">
        <title>Whole-genome analysis of the methyl tert-butyl ether-degrading beta-proteobacterium Methylibium petroleiphilum PM1.</title>
        <authorList>
            <person name="Kane S.R."/>
            <person name="Chakicherla A.Y."/>
            <person name="Chain P.S.G."/>
            <person name="Schmidt R."/>
            <person name="Shin M.W."/>
            <person name="Legler T.C."/>
            <person name="Scow K.M."/>
            <person name="Larimer F.W."/>
            <person name="Lucas S.M."/>
            <person name="Richardson P.M."/>
            <person name="Hristova K.R."/>
        </authorList>
    </citation>
    <scope>NUCLEOTIDE SEQUENCE [LARGE SCALE GENOMIC DNA]</scope>
    <source>
        <strain>ATCC BAA-1232 / LMG 22953 / PM1</strain>
    </source>
</reference>
<keyword id="KW-0547">Nucleotide-binding</keyword>
<keyword id="KW-1185">Reference proteome</keyword>
<feature type="chain" id="PRO_1000051738" description="Nucleotide-binding protein Mpe_A3039">
    <location>
        <begin position="1"/>
        <end position="162"/>
    </location>
</feature>
<dbReference type="EMBL" id="CP000555">
    <property type="protein sequence ID" value="ABM95992.1"/>
    <property type="molecule type" value="Genomic_DNA"/>
</dbReference>
<dbReference type="RefSeq" id="WP_011830615.1">
    <property type="nucleotide sequence ID" value="NC_008825.1"/>
</dbReference>
<dbReference type="SMR" id="A2SKA3"/>
<dbReference type="STRING" id="420662.Mpe_A3039"/>
<dbReference type="KEGG" id="mpt:Mpe_A3039"/>
<dbReference type="eggNOG" id="COG1666">
    <property type="taxonomic scope" value="Bacteria"/>
</dbReference>
<dbReference type="HOGENOM" id="CLU_099839_1_0_4"/>
<dbReference type="Proteomes" id="UP000000366">
    <property type="component" value="Chromosome"/>
</dbReference>
<dbReference type="GO" id="GO:0005829">
    <property type="term" value="C:cytosol"/>
    <property type="evidence" value="ECO:0007669"/>
    <property type="project" value="TreeGrafter"/>
</dbReference>
<dbReference type="GO" id="GO:0000166">
    <property type="term" value="F:nucleotide binding"/>
    <property type="evidence" value="ECO:0007669"/>
    <property type="project" value="TreeGrafter"/>
</dbReference>
<dbReference type="CDD" id="cd11740">
    <property type="entry name" value="YajQ_like"/>
    <property type="match status" value="1"/>
</dbReference>
<dbReference type="Gene3D" id="3.30.70.860">
    <property type="match status" value="1"/>
</dbReference>
<dbReference type="Gene3D" id="3.30.70.990">
    <property type="entry name" value="YajQ-like, domain 2"/>
    <property type="match status" value="1"/>
</dbReference>
<dbReference type="HAMAP" id="MF_00632">
    <property type="entry name" value="YajQ"/>
    <property type="match status" value="1"/>
</dbReference>
<dbReference type="InterPro" id="IPR007551">
    <property type="entry name" value="DUF520"/>
</dbReference>
<dbReference type="InterPro" id="IPR035571">
    <property type="entry name" value="UPF0234-like_C"/>
</dbReference>
<dbReference type="InterPro" id="IPR035570">
    <property type="entry name" value="UPF0234_N"/>
</dbReference>
<dbReference type="InterPro" id="IPR036183">
    <property type="entry name" value="YajQ-like_sf"/>
</dbReference>
<dbReference type="NCBIfam" id="NF003819">
    <property type="entry name" value="PRK05412.1"/>
    <property type="match status" value="1"/>
</dbReference>
<dbReference type="PANTHER" id="PTHR30476">
    <property type="entry name" value="UPF0234 PROTEIN YAJQ"/>
    <property type="match status" value="1"/>
</dbReference>
<dbReference type="PANTHER" id="PTHR30476:SF0">
    <property type="entry name" value="UPF0234 PROTEIN YAJQ"/>
    <property type="match status" value="1"/>
</dbReference>
<dbReference type="Pfam" id="PF04461">
    <property type="entry name" value="DUF520"/>
    <property type="match status" value="1"/>
</dbReference>
<dbReference type="SUPFAM" id="SSF89963">
    <property type="entry name" value="YajQ-like"/>
    <property type="match status" value="2"/>
</dbReference>
<accession>A2SKA3</accession>
<comment type="function">
    <text evidence="1">Nucleotide-binding protein.</text>
</comment>
<comment type="similarity">
    <text evidence="1">Belongs to the YajQ family.</text>
</comment>
<organism>
    <name type="scientific">Methylibium petroleiphilum (strain ATCC BAA-1232 / LMG 22953 / PM1)</name>
    <dbReference type="NCBI Taxonomy" id="420662"/>
    <lineage>
        <taxon>Bacteria</taxon>
        <taxon>Pseudomonadati</taxon>
        <taxon>Pseudomonadota</taxon>
        <taxon>Betaproteobacteria</taxon>
        <taxon>Burkholderiales</taxon>
        <taxon>Sphaerotilaceae</taxon>
        <taxon>Methylibium</taxon>
    </lineage>
</organism>
<proteinExistence type="inferred from homology"/>
<evidence type="ECO:0000255" key="1">
    <source>
        <dbReference type="HAMAP-Rule" id="MF_00632"/>
    </source>
</evidence>
<name>Y3039_METPP</name>
<sequence length="162" mass="17962">MPSFDTVLEPNLVEVRNAVDQSSKEIGTRFDFKGSSARVELKDKDITLYADSDFQLSQVMDILTLKLTKRSVDARFLDSSAKIEKIGGDKVKQVLKVKEGIDSETAKKIQQLIKASKMKVQAAIQGDAVRVTGAKRDDLQAAMALIRKDVADVPLSFNNFRD</sequence>